<dbReference type="EC" id="1.3.1.98" evidence="1"/>
<dbReference type="EMBL" id="CP000440">
    <property type="protein sequence ID" value="ABI88158.1"/>
    <property type="molecule type" value="Genomic_DNA"/>
</dbReference>
<dbReference type="RefSeq" id="WP_011657748.1">
    <property type="nucleotide sequence ID" value="NC_008390.1"/>
</dbReference>
<dbReference type="SMR" id="Q0BCG5"/>
<dbReference type="GeneID" id="93085195"/>
<dbReference type="KEGG" id="bam:Bamb_2602"/>
<dbReference type="PATRIC" id="fig|339670.21.peg.2299"/>
<dbReference type="eggNOG" id="COG0812">
    <property type="taxonomic scope" value="Bacteria"/>
</dbReference>
<dbReference type="UniPathway" id="UPA00219"/>
<dbReference type="Proteomes" id="UP000000662">
    <property type="component" value="Chromosome 1"/>
</dbReference>
<dbReference type="GO" id="GO:0005829">
    <property type="term" value="C:cytosol"/>
    <property type="evidence" value="ECO:0007669"/>
    <property type="project" value="TreeGrafter"/>
</dbReference>
<dbReference type="GO" id="GO:0071949">
    <property type="term" value="F:FAD binding"/>
    <property type="evidence" value="ECO:0007669"/>
    <property type="project" value="InterPro"/>
</dbReference>
<dbReference type="GO" id="GO:0008762">
    <property type="term" value="F:UDP-N-acetylmuramate dehydrogenase activity"/>
    <property type="evidence" value="ECO:0007669"/>
    <property type="project" value="UniProtKB-UniRule"/>
</dbReference>
<dbReference type="GO" id="GO:0051301">
    <property type="term" value="P:cell division"/>
    <property type="evidence" value="ECO:0007669"/>
    <property type="project" value="UniProtKB-KW"/>
</dbReference>
<dbReference type="GO" id="GO:0071555">
    <property type="term" value="P:cell wall organization"/>
    <property type="evidence" value="ECO:0007669"/>
    <property type="project" value="UniProtKB-KW"/>
</dbReference>
<dbReference type="GO" id="GO:0009252">
    <property type="term" value="P:peptidoglycan biosynthetic process"/>
    <property type="evidence" value="ECO:0007669"/>
    <property type="project" value="UniProtKB-UniRule"/>
</dbReference>
<dbReference type="GO" id="GO:0008360">
    <property type="term" value="P:regulation of cell shape"/>
    <property type="evidence" value="ECO:0007669"/>
    <property type="project" value="UniProtKB-KW"/>
</dbReference>
<dbReference type="Gene3D" id="3.30.465.10">
    <property type="match status" value="1"/>
</dbReference>
<dbReference type="Gene3D" id="3.90.78.10">
    <property type="entry name" value="UDP-N-acetylenolpyruvoylglucosamine reductase, C-terminal domain"/>
    <property type="match status" value="1"/>
</dbReference>
<dbReference type="Gene3D" id="3.30.43.10">
    <property type="entry name" value="Uridine Diphospho-n-acetylenolpyruvylglucosamine Reductase, domain 2"/>
    <property type="match status" value="1"/>
</dbReference>
<dbReference type="HAMAP" id="MF_00037">
    <property type="entry name" value="MurB"/>
    <property type="match status" value="1"/>
</dbReference>
<dbReference type="InterPro" id="IPR016166">
    <property type="entry name" value="FAD-bd_PCMH"/>
</dbReference>
<dbReference type="InterPro" id="IPR036318">
    <property type="entry name" value="FAD-bd_PCMH-like_sf"/>
</dbReference>
<dbReference type="InterPro" id="IPR016167">
    <property type="entry name" value="FAD-bd_PCMH_sub1"/>
</dbReference>
<dbReference type="InterPro" id="IPR016169">
    <property type="entry name" value="FAD-bd_PCMH_sub2"/>
</dbReference>
<dbReference type="InterPro" id="IPR003170">
    <property type="entry name" value="MurB"/>
</dbReference>
<dbReference type="InterPro" id="IPR011601">
    <property type="entry name" value="MurB_C"/>
</dbReference>
<dbReference type="InterPro" id="IPR036635">
    <property type="entry name" value="MurB_C_sf"/>
</dbReference>
<dbReference type="InterPro" id="IPR006094">
    <property type="entry name" value="Oxid_FAD_bind_N"/>
</dbReference>
<dbReference type="NCBIfam" id="TIGR00179">
    <property type="entry name" value="murB"/>
    <property type="match status" value="1"/>
</dbReference>
<dbReference type="NCBIfam" id="NF000755">
    <property type="entry name" value="PRK00046.1"/>
    <property type="match status" value="1"/>
</dbReference>
<dbReference type="NCBIfam" id="NF010478">
    <property type="entry name" value="PRK13903.1"/>
    <property type="match status" value="1"/>
</dbReference>
<dbReference type="PANTHER" id="PTHR21071">
    <property type="entry name" value="UDP-N-ACETYLENOLPYRUVOYLGLUCOSAMINE REDUCTASE"/>
    <property type="match status" value="1"/>
</dbReference>
<dbReference type="PANTHER" id="PTHR21071:SF4">
    <property type="entry name" value="UDP-N-ACETYLENOLPYRUVOYLGLUCOSAMINE REDUCTASE"/>
    <property type="match status" value="1"/>
</dbReference>
<dbReference type="Pfam" id="PF01565">
    <property type="entry name" value="FAD_binding_4"/>
    <property type="match status" value="1"/>
</dbReference>
<dbReference type="Pfam" id="PF02873">
    <property type="entry name" value="MurB_C"/>
    <property type="match status" value="1"/>
</dbReference>
<dbReference type="SUPFAM" id="SSF56176">
    <property type="entry name" value="FAD-binding/transporter-associated domain-like"/>
    <property type="match status" value="1"/>
</dbReference>
<dbReference type="SUPFAM" id="SSF56194">
    <property type="entry name" value="Uridine diphospho-N-Acetylenolpyruvylglucosamine reductase, MurB, C-terminal domain"/>
    <property type="match status" value="1"/>
</dbReference>
<dbReference type="PROSITE" id="PS51387">
    <property type="entry name" value="FAD_PCMH"/>
    <property type="match status" value="1"/>
</dbReference>
<comment type="function">
    <text evidence="1">Cell wall formation.</text>
</comment>
<comment type="catalytic activity">
    <reaction evidence="1">
        <text>UDP-N-acetyl-alpha-D-muramate + NADP(+) = UDP-N-acetyl-3-O-(1-carboxyvinyl)-alpha-D-glucosamine + NADPH + H(+)</text>
        <dbReference type="Rhea" id="RHEA:12248"/>
        <dbReference type="ChEBI" id="CHEBI:15378"/>
        <dbReference type="ChEBI" id="CHEBI:57783"/>
        <dbReference type="ChEBI" id="CHEBI:58349"/>
        <dbReference type="ChEBI" id="CHEBI:68483"/>
        <dbReference type="ChEBI" id="CHEBI:70757"/>
        <dbReference type="EC" id="1.3.1.98"/>
    </reaction>
</comment>
<comment type="cofactor">
    <cofactor evidence="1">
        <name>FAD</name>
        <dbReference type="ChEBI" id="CHEBI:57692"/>
    </cofactor>
</comment>
<comment type="pathway">
    <text evidence="1">Cell wall biogenesis; peptidoglycan biosynthesis.</text>
</comment>
<comment type="subcellular location">
    <subcellularLocation>
        <location evidence="1">Cytoplasm</location>
    </subcellularLocation>
</comment>
<comment type="similarity">
    <text evidence="1">Belongs to the MurB family.</text>
</comment>
<organism>
    <name type="scientific">Burkholderia ambifaria (strain ATCC BAA-244 / DSM 16087 / CCUG 44356 / LMG 19182 / AMMD)</name>
    <name type="common">Burkholderia cepacia (strain AMMD)</name>
    <dbReference type="NCBI Taxonomy" id="339670"/>
    <lineage>
        <taxon>Bacteria</taxon>
        <taxon>Pseudomonadati</taxon>
        <taxon>Pseudomonadota</taxon>
        <taxon>Betaproteobacteria</taxon>
        <taxon>Burkholderiales</taxon>
        <taxon>Burkholderiaceae</taxon>
        <taxon>Burkholderia</taxon>
        <taxon>Burkholderia cepacia complex</taxon>
    </lineage>
</organism>
<sequence>MPMPPDDSALSLLPDHPLAAHNTFGIDATARFAARITHAAQFAALHRDPRVAHLPQLVLGGGSNVVFTRDFDGIVLLDEIAGRRVVREDDDAWYVEAGGGETWHAFVAWTLEHGMPGLENLALIPGTVGAAPIQNIGAYGLEMKTYFDSLVAVELATGRSERFDAARCAFGYRDSFFKREGRGRFAIVAVTFRLPKRWTPRLGYADVTRELDARGIAPEAATPRDVFDAVVAIRRAKLPDPLELGNAGSFFKNPVIDAARFDALRARVPDVVSYPQPGGQVKLAAGWLIDRCGWKGRALGAAAVHDRQALVLVNRGGATGADVLALARAIQDDVRKQFGVELEPEPVCV</sequence>
<proteinExistence type="inferred from homology"/>
<reference key="1">
    <citation type="submission" date="2006-08" db="EMBL/GenBank/DDBJ databases">
        <title>Complete sequence of chromosome 1 of Burkholderia cepacia AMMD.</title>
        <authorList>
            <person name="Copeland A."/>
            <person name="Lucas S."/>
            <person name="Lapidus A."/>
            <person name="Barry K."/>
            <person name="Detter J.C."/>
            <person name="Glavina del Rio T."/>
            <person name="Hammon N."/>
            <person name="Israni S."/>
            <person name="Pitluck S."/>
            <person name="Bruce D."/>
            <person name="Chain P."/>
            <person name="Malfatti S."/>
            <person name="Shin M."/>
            <person name="Vergez L."/>
            <person name="Schmutz J."/>
            <person name="Larimer F."/>
            <person name="Land M."/>
            <person name="Hauser L."/>
            <person name="Kyrpides N."/>
            <person name="Kim E."/>
            <person name="Parke J."/>
            <person name="Coenye T."/>
            <person name="Konstantinidis K."/>
            <person name="Ramette A."/>
            <person name="Tiedje J."/>
            <person name="Richardson P."/>
        </authorList>
    </citation>
    <scope>NUCLEOTIDE SEQUENCE [LARGE SCALE GENOMIC DNA]</scope>
    <source>
        <strain>ATCC BAA-244 / DSM 16087 / CCUG 44356 / LMG 19182 / AMMD</strain>
    </source>
</reference>
<evidence type="ECO:0000255" key="1">
    <source>
        <dbReference type="HAMAP-Rule" id="MF_00037"/>
    </source>
</evidence>
<protein>
    <recommendedName>
        <fullName evidence="1">UDP-N-acetylenolpyruvoylglucosamine reductase</fullName>
        <ecNumber evidence="1">1.3.1.98</ecNumber>
    </recommendedName>
    <alternativeName>
        <fullName evidence="1">UDP-N-acetylmuramate dehydrogenase</fullName>
    </alternativeName>
</protein>
<keyword id="KW-0131">Cell cycle</keyword>
<keyword id="KW-0132">Cell division</keyword>
<keyword id="KW-0133">Cell shape</keyword>
<keyword id="KW-0961">Cell wall biogenesis/degradation</keyword>
<keyword id="KW-0963">Cytoplasm</keyword>
<keyword id="KW-0274">FAD</keyword>
<keyword id="KW-0285">Flavoprotein</keyword>
<keyword id="KW-0521">NADP</keyword>
<keyword id="KW-0560">Oxidoreductase</keyword>
<keyword id="KW-0573">Peptidoglycan synthesis</keyword>
<feature type="chain" id="PRO_1000002870" description="UDP-N-acetylenolpyruvoylglucosamine reductase">
    <location>
        <begin position="1"/>
        <end position="349"/>
    </location>
</feature>
<feature type="domain" description="FAD-binding PCMH-type" evidence="1">
    <location>
        <begin position="24"/>
        <end position="197"/>
    </location>
</feature>
<feature type="active site" evidence="1">
    <location>
        <position position="173"/>
    </location>
</feature>
<feature type="active site" description="Proton donor" evidence="1">
    <location>
        <position position="249"/>
    </location>
</feature>
<feature type="active site" evidence="1">
    <location>
        <position position="345"/>
    </location>
</feature>
<name>MURB_BURCM</name>
<gene>
    <name evidence="1" type="primary">murB</name>
    <name type="ordered locus">Bamb_2602</name>
</gene>
<accession>Q0BCG5</accession>